<proteinExistence type="inferred from homology"/>
<keyword id="KW-0175">Coiled coil</keyword>
<keyword id="KW-0436">Ligase</keyword>
<protein>
    <recommendedName>
        <fullName evidence="1">Putative cysteine ligase BshC</fullName>
        <ecNumber evidence="1">6.-.-.-</ecNumber>
    </recommendedName>
</protein>
<name>BSHC_GEOTN</name>
<feature type="chain" id="PRO_0000378239" description="Putative cysteine ligase BshC">
    <location>
        <begin position="1"/>
        <end position="542"/>
    </location>
</feature>
<feature type="coiled-coil region" evidence="1">
    <location>
        <begin position="458"/>
        <end position="487"/>
    </location>
</feature>
<dbReference type="EC" id="6.-.-.-" evidence="1"/>
<dbReference type="EMBL" id="CP000557">
    <property type="protein sequence ID" value="ABO66353.1"/>
    <property type="status" value="ALT_INIT"/>
    <property type="molecule type" value="Genomic_DNA"/>
</dbReference>
<dbReference type="RefSeq" id="WP_008878697.1">
    <property type="nucleotide sequence ID" value="NC_009328.1"/>
</dbReference>
<dbReference type="SMR" id="A4ILZ9"/>
<dbReference type="KEGG" id="gtn:GTNG_0975"/>
<dbReference type="eggNOG" id="COG4365">
    <property type="taxonomic scope" value="Bacteria"/>
</dbReference>
<dbReference type="HOGENOM" id="CLU_022249_1_0_9"/>
<dbReference type="Proteomes" id="UP000001578">
    <property type="component" value="Chromosome"/>
</dbReference>
<dbReference type="GO" id="GO:0016874">
    <property type="term" value="F:ligase activity"/>
    <property type="evidence" value="ECO:0007669"/>
    <property type="project" value="UniProtKB-UniRule"/>
</dbReference>
<dbReference type="HAMAP" id="MF_01867">
    <property type="entry name" value="BshC"/>
    <property type="match status" value="1"/>
</dbReference>
<dbReference type="InterPro" id="IPR011199">
    <property type="entry name" value="Bacillithiol_biosynth_BshC"/>
</dbReference>
<dbReference type="InterPro" id="IPR055399">
    <property type="entry name" value="CC_BshC"/>
</dbReference>
<dbReference type="InterPro" id="IPR055398">
    <property type="entry name" value="Rossmann-like_BshC"/>
</dbReference>
<dbReference type="NCBIfam" id="TIGR03998">
    <property type="entry name" value="thiol_BshC"/>
    <property type="match status" value="1"/>
</dbReference>
<dbReference type="Pfam" id="PF24850">
    <property type="entry name" value="CC_BshC"/>
    <property type="match status" value="1"/>
</dbReference>
<dbReference type="Pfam" id="PF10079">
    <property type="entry name" value="Rossmann-like_BshC"/>
    <property type="match status" value="1"/>
</dbReference>
<dbReference type="PIRSF" id="PIRSF012535">
    <property type="entry name" value="UCP012535"/>
    <property type="match status" value="1"/>
</dbReference>
<reference key="1">
    <citation type="journal article" date="2007" name="Proc. Natl. Acad. Sci. U.S.A.">
        <title>Genome and proteome of long-chain alkane degrading Geobacillus thermodenitrificans NG80-2 isolated from a deep-subsurface oil reservoir.</title>
        <authorList>
            <person name="Feng L."/>
            <person name="Wang W."/>
            <person name="Cheng J."/>
            <person name="Ren Y."/>
            <person name="Zhao G."/>
            <person name="Gao C."/>
            <person name="Tang Y."/>
            <person name="Liu X."/>
            <person name="Han W."/>
            <person name="Peng X."/>
            <person name="Liu R."/>
            <person name="Wang L."/>
        </authorList>
    </citation>
    <scope>NUCLEOTIDE SEQUENCE [LARGE SCALE GENOMIC DNA]</scope>
    <source>
        <strain>NG80-2</strain>
    </source>
</reference>
<accession>A4ILZ9</accession>
<organism>
    <name type="scientific">Geobacillus thermodenitrificans (strain NG80-2)</name>
    <dbReference type="NCBI Taxonomy" id="420246"/>
    <lineage>
        <taxon>Bacteria</taxon>
        <taxon>Bacillati</taxon>
        <taxon>Bacillota</taxon>
        <taxon>Bacilli</taxon>
        <taxon>Bacillales</taxon>
        <taxon>Anoxybacillaceae</taxon>
        <taxon>Geobacillus</taxon>
    </lineage>
</organism>
<evidence type="ECO:0000255" key="1">
    <source>
        <dbReference type="HAMAP-Rule" id="MF_01867"/>
    </source>
</evidence>
<evidence type="ECO:0000305" key="2"/>
<comment type="function">
    <text evidence="1">Involved in bacillithiol (BSH) biosynthesis. May catalyze the last step of the pathway, the addition of cysteine to glucosamine malate (GlcN-Mal) to generate BSH.</text>
</comment>
<comment type="similarity">
    <text evidence="1">Belongs to the BshC family.</text>
</comment>
<comment type="sequence caution" evidence="2">
    <conflict type="erroneous initiation">
        <sequence resource="EMBL-CDS" id="ABO66353"/>
    </conflict>
</comment>
<sequence>MEVREVPLPATTKLAADYITGAFPAEKGFGYARTDDEAFRRRLIHLQTRTYDRHGLADYLQAYHRRFSASAATMNNIDKLRDENSVVIVGGQQAGLLTGPLYTIYKIITIIRLAKEQEQKLGVPVVPLFWIAGEDHDIAEVDHVYVVEDGEVKKVVYPHKLKEKQMAADVPLDRQLADAWIERVVKTYGETDVTNELLSFLAACLDDSHTFVDFFAAIVLRLFADDGLVVLNAGDASVRPLERRFFAALIDRHRDVTSAVLAQQEALRALGYAPLIEIAPNAANLFYYDGRERSLLHYDEESGLFRNKTGSVALTKQQLLELAEAKPACLSNNVVTRPLMQEYLLPTLAFIAGPGEIAYWAELKEVFALFGMEMPPVVPRLQATLVSRSLQTDLVDIGLEAADVLSGRLEAVKQQWLKATAEAPLTEAFAKAKADIEAAHRPLRELGVAIDRGLEGLVAKNAAIIQAQIEFLQQTLERALLSKHEVEWRKFWRVETSLRPNGAPQERVWNVFYYVNRYGFDFVEKLSAISNPGNGMHKIVYI</sequence>
<gene>
    <name evidence="1" type="primary">bshC</name>
    <name type="ordered locus">GTNG_0975</name>
</gene>